<proteinExistence type="inferred from homology"/>
<reference key="1">
    <citation type="journal article" date="2006" name="J. Bacteriol.">
        <title>Pathogenomic sequence analysis of Bacillus cereus and Bacillus thuringiensis isolates closely related to Bacillus anthracis.</title>
        <authorList>
            <person name="Han C.S."/>
            <person name="Xie G."/>
            <person name="Challacombe J.F."/>
            <person name="Altherr M.R."/>
            <person name="Bhotika S.S."/>
            <person name="Bruce D."/>
            <person name="Campbell C.S."/>
            <person name="Campbell M.L."/>
            <person name="Chen J."/>
            <person name="Chertkov O."/>
            <person name="Cleland C."/>
            <person name="Dimitrijevic M."/>
            <person name="Doggett N.A."/>
            <person name="Fawcett J.J."/>
            <person name="Glavina T."/>
            <person name="Goodwin L.A."/>
            <person name="Hill K.K."/>
            <person name="Hitchcock P."/>
            <person name="Jackson P.J."/>
            <person name="Keim P."/>
            <person name="Kewalramani A.R."/>
            <person name="Longmire J."/>
            <person name="Lucas S."/>
            <person name="Malfatti S."/>
            <person name="McMurry K."/>
            <person name="Meincke L.J."/>
            <person name="Misra M."/>
            <person name="Moseman B.L."/>
            <person name="Mundt M."/>
            <person name="Munk A.C."/>
            <person name="Okinaka R.T."/>
            <person name="Parson-Quintana B."/>
            <person name="Reilly L.P."/>
            <person name="Richardson P."/>
            <person name="Robinson D.L."/>
            <person name="Rubin E."/>
            <person name="Saunders E."/>
            <person name="Tapia R."/>
            <person name="Tesmer J.G."/>
            <person name="Thayer N."/>
            <person name="Thompson L.S."/>
            <person name="Tice H."/>
            <person name="Ticknor L.O."/>
            <person name="Wills P.L."/>
            <person name="Brettin T.S."/>
            <person name="Gilna P."/>
        </authorList>
    </citation>
    <scope>NUCLEOTIDE SEQUENCE [LARGE SCALE GENOMIC DNA]</scope>
    <source>
        <strain>ZK / E33L</strain>
    </source>
</reference>
<evidence type="ECO:0000255" key="1">
    <source>
        <dbReference type="HAMAP-Rule" id="MF_00391"/>
    </source>
</evidence>
<evidence type="ECO:0000256" key="2">
    <source>
        <dbReference type="SAM" id="MobiDB-lite"/>
    </source>
</evidence>
<evidence type="ECO:0000305" key="3"/>
<name>RL34_BACCZ</name>
<comment type="similarity">
    <text evidence="1">Belongs to the bacterial ribosomal protein bL34 family.</text>
</comment>
<keyword id="KW-0687">Ribonucleoprotein</keyword>
<keyword id="KW-0689">Ribosomal protein</keyword>
<gene>
    <name evidence="1" type="primary">rpmH</name>
    <name type="ordered locus">BCE33L5185</name>
</gene>
<dbReference type="EMBL" id="CP000001">
    <property type="protein sequence ID" value="AAU20317.1"/>
    <property type="molecule type" value="Genomic_DNA"/>
</dbReference>
<dbReference type="RefSeq" id="WP_000831901.1">
    <property type="nucleotide sequence ID" value="NZ_CP009968.1"/>
</dbReference>
<dbReference type="SMR" id="Q630B4"/>
<dbReference type="GeneID" id="93005634"/>
<dbReference type="KEGG" id="bcz:BCE33L5185"/>
<dbReference type="PATRIC" id="fig|288681.22.peg.156"/>
<dbReference type="Proteomes" id="UP000002612">
    <property type="component" value="Chromosome"/>
</dbReference>
<dbReference type="GO" id="GO:1990904">
    <property type="term" value="C:ribonucleoprotein complex"/>
    <property type="evidence" value="ECO:0007669"/>
    <property type="project" value="UniProtKB-KW"/>
</dbReference>
<dbReference type="GO" id="GO:0005840">
    <property type="term" value="C:ribosome"/>
    <property type="evidence" value="ECO:0007669"/>
    <property type="project" value="UniProtKB-KW"/>
</dbReference>
<dbReference type="GO" id="GO:0003735">
    <property type="term" value="F:structural constituent of ribosome"/>
    <property type="evidence" value="ECO:0007669"/>
    <property type="project" value="InterPro"/>
</dbReference>
<dbReference type="GO" id="GO:0006412">
    <property type="term" value="P:translation"/>
    <property type="evidence" value="ECO:0007669"/>
    <property type="project" value="UniProtKB-UniRule"/>
</dbReference>
<dbReference type="FunFam" id="1.10.287.3980:FF:000001">
    <property type="entry name" value="Mitochondrial ribosomal protein L34"/>
    <property type="match status" value="1"/>
</dbReference>
<dbReference type="Gene3D" id="1.10.287.3980">
    <property type="match status" value="1"/>
</dbReference>
<dbReference type="HAMAP" id="MF_00391">
    <property type="entry name" value="Ribosomal_bL34"/>
    <property type="match status" value="1"/>
</dbReference>
<dbReference type="InterPro" id="IPR000271">
    <property type="entry name" value="Ribosomal_bL34"/>
</dbReference>
<dbReference type="InterPro" id="IPR020939">
    <property type="entry name" value="Ribosomal_bL34_CS"/>
</dbReference>
<dbReference type="NCBIfam" id="TIGR01030">
    <property type="entry name" value="rpmH_bact"/>
    <property type="match status" value="1"/>
</dbReference>
<dbReference type="PANTHER" id="PTHR14503:SF4">
    <property type="entry name" value="LARGE RIBOSOMAL SUBUNIT PROTEIN BL34M"/>
    <property type="match status" value="1"/>
</dbReference>
<dbReference type="PANTHER" id="PTHR14503">
    <property type="entry name" value="MITOCHONDRIAL RIBOSOMAL PROTEIN 34 FAMILY MEMBER"/>
    <property type="match status" value="1"/>
</dbReference>
<dbReference type="Pfam" id="PF00468">
    <property type="entry name" value="Ribosomal_L34"/>
    <property type="match status" value="1"/>
</dbReference>
<dbReference type="PROSITE" id="PS00784">
    <property type="entry name" value="RIBOSOMAL_L34"/>
    <property type="match status" value="1"/>
</dbReference>
<feature type="chain" id="PRO_1000013280" description="Large ribosomal subunit protein bL34">
    <location>
        <begin position="1"/>
        <end position="44"/>
    </location>
</feature>
<feature type="region of interest" description="Disordered" evidence="2">
    <location>
        <begin position="1"/>
        <end position="44"/>
    </location>
</feature>
<feature type="compositionally biased region" description="Basic residues" evidence="2">
    <location>
        <begin position="1"/>
        <end position="19"/>
    </location>
</feature>
<feature type="compositionally biased region" description="Basic residues" evidence="2">
    <location>
        <begin position="31"/>
        <end position="44"/>
    </location>
</feature>
<sequence length="44" mass="5170">MKRTYQPNKRKRSKVHGFRSRMSTANGRKVLAARRRKGRKVLSA</sequence>
<accession>Q630B4</accession>
<organism>
    <name type="scientific">Bacillus cereus (strain ZK / E33L)</name>
    <dbReference type="NCBI Taxonomy" id="288681"/>
    <lineage>
        <taxon>Bacteria</taxon>
        <taxon>Bacillati</taxon>
        <taxon>Bacillota</taxon>
        <taxon>Bacilli</taxon>
        <taxon>Bacillales</taxon>
        <taxon>Bacillaceae</taxon>
        <taxon>Bacillus</taxon>
        <taxon>Bacillus cereus group</taxon>
    </lineage>
</organism>
<protein>
    <recommendedName>
        <fullName evidence="1">Large ribosomal subunit protein bL34</fullName>
    </recommendedName>
    <alternativeName>
        <fullName evidence="3">50S ribosomal protein L34</fullName>
    </alternativeName>
</protein>